<accession>Q0I8P5</accession>
<comment type="function">
    <text evidence="1">Component of the dark-operative protochlorophyllide reductase (DPOR) that uses Mg-ATP and reduced ferredoxin to reduce ring D of protochlorophyllide (Pchlide) to form chlorophyllide a (Chlide). This reaction is light-independent. The NB-protein (ChlN-ChlB) is the catalytic component of the complex.</text>
</comment>
<comment type="catalytic activity">
    <reaction evidence="1">
        <text>chlorophyllide a + oxidized 2[4Fe-4S]-[ferredoxin] + 2 ADP + 2 phosphate = protochlorophyllide a + reduced 2[4Fe-4S]-[ferredoxin] + 2 ATP + 2 H2O</text>
        <dbReference type="Rhea" id="RHEA:28202"/>
        <dbReference type="Rhea" id="RHEA-COMP:10002"/>
        <dbReference type="Rhea" id="RHEA-COMP:10004"/>
        <dbReference type="ChEBI" id="CHEBI:15377"/>
        <dbReference type="ChEBI" id="CHEBI:30616"/>
        <dbReference type="ChEBI" id="CHEBI:33722"/>
        <dbReference type="ChEBI" id="CHEBI:33723"/>
        <dbReference type="ChEBI" id="CHEBI:43474"/>
        <dbReference type="ChEBI" id="CHEBI:83348"/>
        <dbReference type="ChEBI" id="CHEBI:83350"/>
        <dbReference type="ChEBI" id="CHEBI:456216"/>
        <dbReference type="EC" id="1.3.7.7"/>
    </reaction>
</comment>
<comment type="cofactor">
    <cofactor evidence="1">
        <name>[4Fe-4S] cluster</name>
        <dbReference type="ChEBI" id="CHEBI:49883"/>
    </cofactor>
    <text evidence="1">Binds 1 [4Fe-4S] cluster per heterodimer. The cluster is bound at the heterodimer interface by residues from both subunits.</text>
</comment>
<comment type="pathway">
    <text evidence="1">Porphyrin-containing compound metabolism; chlorophyll biosynthesis (light-independent).</text>
</comment>
<comment type="subunit">
    <text evidence="1">Protochlorophyllide reductase is composed of three subunits; ChlL, ChlN and ChlB. Forms a heterotetramer of two ChlB and two ChlN subunits.</text>
</comment>
<comment type="similarity">
    <text evidence="1">Belongs to the ChlB/BchB/BchZ family.</text>
</comment>
<keyword id="KW-0004">4Fe-4S</keyword>
<keyword id="KW-0067">ATP-binding</keyword>
<keyword id="KW-0149">Chlorophyll biosynthesis</keyword>
<keyword id="KW-0408">Iron</keyword>
<keyword id="KW-0411">Iron-sulfur</keyword>
<keyword id="KW-0479">Metal-binding</keyword>
<keyword id="KW-0547">Nucleotide-binding</keyword>
<keyword id="KW-0560">Oxidoreductase</keyword>
<keyword id="KW-0602">Photosynthesis</keyword>
<keyword id="KW-1185">Reference proteome</keyword>
<proteinExistence type="inferred from homology"/>
<dbReference type="EC" id="1.3.7.7" evidence="1"/>
<dbReference type="EMBL" id="CP000435">
    <property type="protein sequence ID" value="ABI46578.1"/>
    <property type="molecule type" value="Genomic_DNA"/>
</dbReference>
<dbReference type="RefSeq" id="WP_011619889.1">
    <property type="nucleotide sequence ID" value="NC_008319.1"/>
</dbReference>
<dbReference type="SMR" id="Q0I8P5"/>
<dbReference type="STRING" id="64471.sync_1974"/>
<dbReference type="KEGG" id="syg:sync_1974"/>
<dbReference type="eggNOG" id="COG2710">
    <property type="taxonomic scope" value="Bacteria"/>
</dbReference>
<dbReference type="HOGENOM" id="CLU_025470_0_0_3"/>
<dbReference type="OrthoDB" id="5717231at2"/>
<dbReference type="UniPathway" id="UPA00670"/>
<dbReference type="Proteomes" id="UP000001961">
    <property type="component" value="Chromosome"/>
</dbReference>
<dbReference type="GO" id="GO:0051539">
    <property type="term" value="F:4 iron, 4 sulfur cluster binding"/>
    <property type="evidence" value="ECO:0007669"/>
    <property type="project" value="UniProtKB-UniRule"/>
</dbReference>
<dbReference type="GO" id="GO:0005524">
    <property type="term" value="F:ATP binding"/>
    <property type="evidence" value="ECO:0007669"/>
    <property type="project" value="UniProtKB-UniRule"/>
</dbReference>
<dbReference type="GO" id="GO:0046872">
    <property type="term" value="F:metal ion binding"/>
    <property type="evidence" value="ECO:0007669"/>
    <property type="project" value="UniProtKB-KW"/>
</dbReference>
<dbReference type="GO" id="GO:0016730">
    <property type="term" value="F:oxidoreductase activity, acting on iron-sulfur proteins as donors"/>
    <property type="evidence" value="ECO:0007669"/>
    <property type="project" value="InterPro"/>
</dbReference>
<dbReference type="GO" id="GO:0016636">
    <property type="term" value="F:oxidoreductase activity, acting on the CH-CH group of donors, iron-sulfur protein as acceptor"/>
    <property type="evidence" value="ECO:0007669"/>
    <property type="project" value="UniProtKB-UniRule"/>
</dbReference>
<dbReference type="GO" id="GO:0036068">
    <property type="term" value="P:light-independent chlorophyll biosynthetic process"/>
    <property type="evidence" value="ECO:0007669"/>
    <property type="project" value="UniProtKB-UniRule"/>
</dbReference>
<dbReference type="GO" id="GO:0019685">
    <property type="term" value="P:photosynthesis, dark reaction"/>
    <property type="evidence" value="ECO:0007669"/>
    <property type="project" value="InterPro"/>
</dbReference>
<dbReference type="Gene3D" id="1.20.89.20">
    <property type="match status" value="1"/>
</dbReference>
<dbReference type="Gene3D" id="3.40.50.1980">
    <property type="entry name" value="Nitrogenase molybdenum iron protein domain"/>
    <property type="match status" value="3"/>
</dbReference>
<dbReference type="Gene3D" id="1.10.8.550">
    <property type="entry name" value="Proto-chlorophyllide reductase 57 kD subunit B"/>
    <property type="match status" value="1"/>
</dbReference>
<dbReference type="HAMAP" id="MF_00353">
    <property type="entry name" value="ChlB_BchB"/>
    <property type="match status" value="1"/>
</dbReference>
<dbReference type="InterPro" id="IPR050152">
    <property type="entry name" value="ChlB/BchB/BchZ"/>
</dbReference>
<dbReference type="InterPro" id="IPR013580">
    <property type="entry name" value="LI-POR_suB-like_C"/>
</dbReference>
<dbReference type="InterPro" id="IPR000510">
    <property type="entry name" value="Nase/OxRdtase_comp1"/>
</dbReference>
<dbReference type="InterPro" id="IPR042298">
    <property type="entry name" value="P-CP_red_C"/>
</dbReference>
<dbReference type="InterPro" id="IPR005969">
    <property type="entry name" value="Protochl_reductB"/>
</dbReference>
<dbReference type="InterPro" id="IPR016209">
    <property type="entry name" value="Protochlorophyllide_Rdtase"/>
</dbReference>
<dbReference type="NCBIfam" id="TIGR01278">
    <property type="entry name" value="DPOR_BchB"/>
    <property type="match status" value="1"/>
</dbReference>
<dbReference type="NCBIfam" id="NF002790">
    <property type="entry name" value="PRK02910.1-4"/>
    <property type="match status" value="1"/>
</dbReference>
<dbReference type="PANTHER" id="PTHR33712">
    <property type="entry name" value="LIGHT-INDEPENDENT PROTOCHLOROPHYLLIDE REDUCTASE SUBUNIT B"/>
    <property type="match status" value="1"/>
</dbReference>
<dbReference type="PANTHER" id="PTHR33712:SF7">
    <property type="entry name" value="LIGHT-INDEPENDENT PROTOCHLOROPHYLLIDE REDUCTASE SUBUNIT B"/>
    <property type="match status" value="1"/>
</dbReference>
<dbReference type="Pfam" id="PF00148">
    <property type="entry name" value="Oxidored_nitro"/>
    <property type="match status" value="1"/>
</dbReference>
<dbReference type="Pfam" id="PF08369">
    <property type="entry name" value="PCP_red"/>
    <property type="match status" value="1"/>
</dbReference>
<dbReference type="PIRSF" id="PIRSF000163">
    <property type="entry name" value="PCP_ChlB"/>
    <property type="match status" value="1"/>
</dbReference>
<dbReference type="SUPFAM" id="SSF53807">
    <property type="entry name" value="Helical backbone' metal receptor"/>
    <property type="match status" value="1"/>
</dbReference>
<evidence type="ECO:0000255" key="1">
    <source>
        <dbReference type="HAMAP-Rule" id="MF_00353"/>
    </source>
</evidence>
<reference key="1">
    <citation type="journal article" date="2006" name="Proc. Natl. Acad. Sci. U.S.A.">
        <title>Genome sequence of Synechococcus CC9311: insights into adaptation to a coastal environment.</title>
        <authorList>
            <person name="Palenik B."/>
            <person name="Ren Q."/>
            <person name="Dupont C.L."/>
            <person name="Myers G.S."/>
            <person name="Heidelberg J.F."/>
            <person name="Badger J.H."/>
            <person name="Madupu R."/>
            <person name="Nelson W.C."/>
            <person name="Brinkac L.M."/>
            <person name="Dodson R.J."/>
            <person name="Durkin A.S."/>
            <person name="Daugherty S.C."/>
            <person name="Sullivan S.A."/>
            <person name="Khouri H."/>
            <person name="Mohamoud Y."/>
            <person name="Halpin R."/>
            <person name="Paulsen I.T."/>
        </authorList>
    </citation>
    <scope>NUCLEOTIDE SEQUENCE [LARGE SCALE GENOMIC DNA]</scope>
    <source>
        <strain>CC9311</strain>
    </source>
</reference>
<feature type="chain" id="PRO_1000048429" description="Light-independent protochlorophyllide reductase subunit B">
    <location>
        <begin position="1"/>
        <end position="522"/>
    </location>
</feature>
<feature type="active site" description="Proton donor" evidence="1">
    <location>
        <position position="290"/>
    </location>
</feature>
<feature type="binding site" evidence="1">
    <location>
        <position position="36"/>
    </location>
    <ligand>
        <name>[4Fe-4S] cluster</name>
        <dbReference type="ChEBI" id="CHEBI:49883"/>
        <note>ligand shared with heterodimeric partner</note>
    </ligand>
</feature>
<feature type="binding site" evidence="1">
    <location>
        <begin position="425"/>
        <end position="426"/>
    </location>
    <ligand>
        <name>substrate</name>
    </ligand>
</feature>
<organism>
    <name type="scientific">Synechococcus sp. (strain CC9311)</name>
    <dbReference type="NCBI Taxonomy" id="64471"/>
    <lineage>
        <taxon>Bacteria</taxon>
        <taxon>Bacillati</taxon>
        <taxon>Cyanobacteriota</taxon>
        <taxon>Cyanophyceae</taxon>
        <taxon>Synechococcales</taxon>
        <taxon>Synechococcaceae</taxon>
        <taxon>Synechococcus</taxon>
    </lineage>
</organism>
<name>CHLB_SYNS3</name>
<sequence length="522" mass="57321">MQLTLWTYEGPPHVGAMRIAASMKGVHYVLHAPQGDTYADLLFTMIERRDQRPPVTYTTFQARDLGGDTAELVKRHVREAVDRFQPDALLVGESCTAELIQDQPGALAAGMGLTMPIVNLELPAYSKKENWGAAETFYQLVRTLLKDQAPAELNHDPKAWQHEGRRPRVNLLGPSLLGFRCRDDVLEIQRLLNMHGIDVGVVAPLGATVADVHRLPEADLNVCLYPEIAESSCAWLERSFGIPFTTTVPIGIGATHDFLVEVHNLLGMTPPSPQEGIRQSRLPWYSESVDSTYLTGKRVFIFGDGTHALAAARICKEELGFEVVGLGTYSREMARPVRAAAKAMGIEALISDDYLAVEAAMAAAAPELVLGTQMERHSAKRLGLPCAVISTPMHVQDVPARNSPQMGWEGANVIFDSWVHPLMMGLEEHLIGMFRHDFEFVDGHQSHLGHSGGSGAIADTEVAVSTLTDELVWTAEGEAELKKIPFFVRGKVRRNTEAFAKSTGRNQIDSETLYDAKAHFSA</sequence>
<gene>
    <name evidence="1" type="primary">chlB</name>
    <name type="ordered locus">sync_1974</name>
</gene>
<protein>
    <recommendedName>
        <fullName evidence="1">Light-independent protochlorophyllide reductase subunit B</fullName>
        <shortName evidence="1">DPOR subunit B</shortName>
        <shortName evidence="1">LI-POR subunit B</shortName>
        <ecNumber evidence="1">1.3.7.7</ecNumber>
    </recommendedName>
</protein>